<organism>
    <name type="scientific">Gallus gallus</name>
    <name type="common">Chicken</name>
    <dbReference type="NCBI Taxonomy" id="9031"/>
    <lineage>
        <taxon>Eukaryota</taxon>
        <taxon>Metazoa</taxon>
        <taxon>Chordata</taxon>
        <taxon>Craniata</taxon>
        <taxon>Vertebrata</taxon>
        <taxon>Euteleostomi</taxon>
        <taxon>Archelosauria</taxon>
        <taxon>Archosauria</taxon>
        <taxon>Dinosauria</taxon>
        <taxon>Saurischia</taxon>
        <taxon>Theropoda</taxon>
        <taxon>Coelurosauria</taxon>
        <taxon>Aves</taxon>
        <taxon>Neognathae</taxon>
        <taxon>Galloanserae</taxon>
        <taxon>Galliformes</taxon>
        <taxon>Phasianidae</taxon>
        <taxon>Phasianinae</taxon>
        <taxon>Gallus</taxon>
    </lineage>
</organism>
<feature type="chain" id="PRO_0000081922" description="Serine/arginine-rich splicing factor 2">
    <location>
        <begin position="1"/>
        <end position="221"/>
    </location>
</feature>
<feature type="domain" description="RRM" evidence="2">
    <location>
        <begin position="14"/>
        <end position="92"/>
    </location>
</feature>
<feature type="region of interest" description="Disordered" evidence="3">
    <location>
        <begin position="91"/>
        <end position="221"/>
    </location>
</feature>
<feature type="compositionally biased region" description="Basic residues" evidence="3">
    <location>
        <begin position="117"/>
        <end position="171"/>
    </location>
</feature>
<feature type="compositionally biased region" description="Basic residues" evidence="3">
    <location>
        <begin position="179"/>
        <end position="189"/>
    </location>
</feature>
<sequence length="221" mass="25524">MSYGRPPPDVEGMTSLKVDNLTYRTSPDTLRRVFEKYGRVGDVYIPRDRYTKESRGFAFVRFHDKRDAEDAMDAMDGAVLDGRELRVQMARYGRPPDSHHSRRGPPPRRYGSSGYGRRSRSPRRRRRSRSRSRSRSRSRSRSRYSRSKSRSRTRSRSRSTSKSRSARRSKSKSSSVSRSRSRSRSRSRSRSPPPTSKRESNSRSRSKSPPKSPEEEGAVSS</sequence>
<evidence type="ECO:0000250" key="1"/>
<evidence type="ECO:0000255" key="2">
    <source>
        <dbReference type="PROSITE-ProRule" id="PRU00176"/>
    </source>
</evidence>
<evidence type="ECO:0000256" key="3">
    <source>
        <dbReference type="SAM" id="MobiDB-lite"/>
    </source>
</evidence>
<evidence type="ECO:0000305" key="4"/>
<gene>
    <name type="primary">SRSF2</name>
    <name type="synonym">SFRS2</name>
</gene>
<comment type="function">
    <text>Necessary for the splicing of pre-mRNA. It is required for formation of the earliest ATP-dependent splicing complex and interacts with spliceosomal components bound to both the 5'- and 3'-splice sites during spliceosome assembly. It also is required for ATP-dependent interactions of both U1 and U2 snRNPs with pre-mRNA.</text>
</comment>
<comment type="subcellular location">
    <subcellularLocation>
        <location>Nucleus</location>
    </subcellularLocation>
</comment>
<comment type="PTM">
    <text evidence="1">Extensively phosphorylated on serine residues in the RS domain.</text>
</comment>
<comment type="similarity">
    <text evidence="4">Belongs to the splicing factor SR family.</text>
</comment>
<reference key="1">
    <citation type="journal article" date="1992" name="Proc. Natl. Acad. Sci. U.S.A.">
        <title>A potential splicing factor is encoded by the opposite strand of the trans-spliced c-myb exon.</title>
        <authorList>
            <person name="Vellard M."/>
            <person name="Sureau A."/>
            <person name="Soret J."/>
            <person name="Martinerie C."/>
            <person name="Perbal B."/>
        </authorList>
    </citation>
    <scope>NUCLEOTIDE SEQUENCE [MRNA]</scope>
    <source>
        <tissue>Thymus</tissue>
    </source>
</reference>
<accession>P30352</accession>
<protein>
    <recommendedName>
        <fullName>Serine/arginine-rich splicing factor 2</fullName>
    </recommendedName>
    <alternativeName>
        <fullName>Protein PR264</fullName>
    </alternativeName>
    <alternativeName>
        <fullName>Splicing component, 35 kDa</fullName>
    </alternativeName>
    <alternativeName>
        <fullName>Splicing factor SC35</fullName>
        <shortName>SC-35</shortName>
    </alternativeName>
    <alternativeName>
        <fullName>Splicing factor, arginine/serine-rich 2</fullName>
    </alternativeName>
</protein>
<dbReference type="EMBL" id="X62446">
    <property type="protein sequence ID" value="CAA44306.1"/>
    <property type="molecule type" value="mRNA"/>
</dbReference>
<dbReference type="PIR" id="B42701">
    <property type="entry name" value="B42701"/>
</dbReference>
<dbReference type="RefSeq" id="NP_001001305.1">
    <property type="nucleotide sequence ID" value="NM_001001305.4"/>
</dbReference>
<dbReference type="RefSeq" id="XP_015150607.1">
    <property type="nucleotide sequence ID" value="XM_015295121.1"/>
</dbReference>
<dbReference type="RefSeq" id="XP_015150608.1">
    <property type="nucleotide sequence ID" value="XM_015295122.1"/>
</dbReference>
<dbReference type="BMRB" id="P30352"/>
<dbReference type="SMR" id="P30352"/>
<dbReference type="FunCoup" id="P30352">
    <property type="interactions" value="3187"/>
</dbReference>
<dbReference type="STRING" id="9031.ENSGALP00000056912"/>
<dbReference type="PaxDb" id="9031-ENSGALP00000027988"/>
<dbReference type="Ensembl" id="ENSGALT00010071031.1">
    <property type="protein sequence ID" value="ENSGALP00010043722.1"/>
    <property type="gene ID" value="ENSGALG00010029370.1"/>
</dbReference>
<dbReference type="GeneID" id="396195"/>
<dbReference type="KEGG" id="gga:396195"/>
<dbReference type="CTD" id="6427"/>
<dbReference type="VEuPathDB" id="HostDB:geneid_396195"/>
<dbReference type="eggNOG" id="KOG4207">
    <property type="taxonomic scope" value="Eukaryota"/>
</dbReference>
<dbReference type="GeneTree" id="ENSGT00940000154883"/>
<dbReference type="HOGENOM" id="CLU_012062_10_3_1"/>
<dbReference type="InParanoid" id="P30352"/>
<dbReference type="OMA" id="PLIRCDV"/>
<dbReference type="OrthoDB" id="8093034at2759"/>
<dbReference type="Reactome" id="R-GGA-72163">
    <property type="pathway name" value="mRNA Splicing - Major Pathway"/>
</dbReference>
<dbReference type="Reactome" id="R-GGA-72165">
    <property type="pathway name" value="mRNA Splicing - Minor Pathway"/>
</dbReference>
<dbReference type="Reactome" id="R-GGA-72187">
    <property type="pathway name" value="mRNA 3'-end processing"/>
</dbReference>
<dbReference type="Reactome" id="R-GGA-72203">
    <property type="pathway name" value="Processing of Capped Intron-Containing Pre-mRNA"/>
</dbReference>
<dbReference type="Reactome" id="R-GGA-73856">
    <property type="pathway name" value="RNA Polymerase II Transcription Termination"/>
</dbReference>
<dbReference type="PRO" id="PR:P30352"/>
<dbReference type="Proteomes" id="UP000000539">
    <property type="component" value="Chromosome 18"/>
</dbReference>
<dbReference type="Bgee" id="ENSGALG00000017357">
    <property type="expression patterns" value="Expressed in spleen and 12 other cell types or tissues"/>
</dbReference>
<dbReference type="GO" id="GO:0016607">
    <property type="term" value="C:nuclear speck"/>
    <property type="evidence" value="ECO:0000318"/>
    <property type="project" value="GO_Central"/>
</dbReference>
<dbReference type="GO" id="GO:0005681">
    <property type="term" value="C:spliceosomal complex"/>
    <property type="evidence" value="ECO:0007669"/>
    <property type="project" value="Ensembl"/>
</dbReference>
<dbReference type="GO" id="GO:0036002">
    <property type="term" value="F:pre-mRNA binding"/>
    <property type="evidence" value="ECO:0007669"/>
    <property type="project" value="Ensembl"/>
</dbReference>
<dbReference type="GO" id="GO:0003723">
    <property type="term" value="F:RNA binding"/>
    <property type="evidence" value="ECO:0000318"/>
    <property type="project" value="GO_Central"/>
</dbReference>
<dbReference type="GO" id="GO:0006397">
    <property type="term" value="P:mRNA processing"/>
    <property type="evidence" value="ECO:0007669"/>
    <property type="project" value="UniProtKB-KW"/>
</dbReference>
<dbReference type="GO" id="GO:0000381">
    <property type="term" value="P:regulation of alternative mRNA splicing, via spliceosome"/>
    <property type="evidence" value="ECO:0000318"/>
    <property type="project" value="GO_Central"/>
</dbReference>
<dbReference type="GO" id="GO:0008380">
    <property type="term" value="P:RNA splicing"/>
    <property type="evidence" value="ECO:0007669"/>
    <property type="project" value="UniProtKB-KW"/>
</dbReference>
<dbReference type="CDD" id="cd12311">
    <property type="entry name" value="RRM_SRSF2_SRSF8"/>
    <property type="match status" value="1"/>
</dbReference>
<dbReference type="FunFam" id="3.30.70.330:FF:000504">
    <property type="entry name" value="Serine/arginine-rich splicing factor 2"/>
    <property type="match status" value="1"/>
</dbReference>
<dbReference type="Gene3D" id="3.30.70.330">
    <property type="match status" value="1"/>
</dbReference>
<dbReference type="InterPro" id="IPR012677">
    <property type="entry name" value="Nucleotide-bd_a/b_plait_sf"/>
</dbReference>
<dbReference type="InterPro" id="IPR035979">
    <property type="entry name" value="RBD_domain_sf"/>
</dbReference>
<dbReference type="InterPro" id="IPR051106">
    <property type="entry name" value="RNA-bind/splicing_reg"/>
</dbReference>
<dbReference type="InterPro" id="IPR000504">
    <property type="entry name" value="RRM_dom"/>
</dbReference>
<dbReference type="InterPro" id="IPR003954">
    <property type="entry name" value="RRM_dom_euk"/>
</dbReference>
<dbReference type="PANTHER" id="PTHR48028">
    <property type="entry name" value="GLYCINE-RICH RNA-BINDING PROTEIN RZ1A"/>
    <property type="match status" value="1"/>
</dbReference>
<dbReference type="PANTHER" id="PTHR48028:SF4">
    <property type="entry name" value="SC35-LIKE SPLICING FACTOR"/>
    <property type="match status" value="1"/>
</dbReference>
<dbReference type="Pfam" id="PF00076">
    <property type="entry name" value="RRM_1"/>
    <property type="match status" value="1"/>
</dbReference>
<dbReference type="SMART" id="SM00360">
    <property type="entry name" value="RRM"/>
    <property type="match status" value="1"/>
</dbReference>
<dbReference type="SMART" id="SM00361">
    <property type="entry name" value="RRM_1"/>
    <property type="match status" value="1"/>
</dbReference>
<dbReference type="SUPFAM" id="SSF54928">
    <property type="entry name" value="RNA-binding domain, RBD"/>
    <property type="match status" value="1"/>
</dbReference>
<dbReference type="PROSITE" id="PS50102">
    <property type="entry name" value="RRM"/>
    <property type="match status" value="1"/>
</dbReference>
<keyword id="KW-0507">mRNA processing</keyword>
<keyword id="KW-0508">mRNA splicing</keyword>
<keyword id="KW-0539">Nucleus</keyword>
<keyword id="KW-0597">Phosphoprotein</keyword>
<keyword id="KW-1185">Reference proteome</keyword>
<keyword id="KW-0694">RNA-binding</keyword>
<proteinExistence type="evidence at transcript level"/>
<name>SRSF2_CHICK</name>